<accession>A9ADV6</accession>
<proteinExistence type="inferred from homology"/>
<keyword id="KW-0028">Amino-acid biosynthesis</keyword>
<keyword id="KW-0057">Aromatic amino acid biosynthesis</keyword>
<keyword id="KW-0963">Cytoplasm</keyword>
<keyword id="KW-1185">Reference proteome</keyword>
<keyword id="KW-0808">Transferase</keyword>
<evidence type="ECO:0000255" key="1">
    <source>
        <dbReference type="HAMAP-Rule" id="MF_00210"/>
    </source>
</evidence>
<comment type="function">
    <text evidence="1">Catalyzes the transfer of the enolpyruvyl moiety of phosphoenolpyruvate (PEP) to the 5-hydroxyl of shikimate-3-phosphate (S3P) to produce enolpyruvyl shikimate-3-phosphate and inorganic phosphate.</text>
</comment>
<comment type="catalytic activity">
    <reaction evidence="1">
        <text>3-phosphoshikimate + phosphoenolpyruvate = 5-O-(1-carboxyvinyl)-3-phosphoshikimate + phosphate</text>
        <dbReference type="Rhea" id="RHEA:21256"/>
        <dbReference type="ChEBI" id="CHEBI:43474"/>
        <dbReference type="ChEBI" id="CHEBI:57701"/>
        <dbReference type="ChEBI" id="CHEBI:58702"/>
        <dbReference type="ChEBI" id="CHEBI:145989"/>
        <dbReference type="EC" id="2.5.1.19"/>
    </reaction>
    <physiologicalReaction direction="left-to-right" evidence="1">
        <dbReference type="Rhea" id="RHEA:21257"/>
    </physiologicalReaction>
</comment>
<comment type="pathway">
    <text evidence="1">Metabolic intermediate biosynthesis; chorismate biosynthesis; chorismate from D-erythrose 4-phosphate and phosphoenolpyruvate: step 6/7.</text>
</comment>
<comment type="subunit">
    <text evidence="1">Monomer.</text>
</comment>
<comment type="subcellular location">
    <subcellularLocation>
        <location evidence="1">Cytoplasm</location>
    </subcellularLocation>
</comment>
<comment type="similarity">
    <text evidence="1">Belongs to the EPSP synthase family.</text>
</comment>
<feature type="chain" id="PRO_1000099672" description="3-phosphoshikimate 1-carboxyvinyltransferase">
    <location>
        <begin position="1"/>
        <end position="434"/>
    </location>
</feature>
<feature type="active site" description="Proton acceptor" evidence="1">
    <location>
        <position position="320"/>
    </location>
</feature>
<feature type="binding site" evidence="1">
    <location>
        <position position="22"/>
    </location>
    <ligand>
        <name>3-phosphoshikimate</name>
        <dbReference type="ChEBI" id="CHEBI:145989"/>
    </ligand>
</feature>
<feature type="binding site" evidence="1">
    <location>
        <position position="22"/>
    </location>
    <ligand>
        <name>phosphoenolpyruvate</name>
        <dbReference type="ChEBI" id="CHEBI:58702"/>
    </ligand>
</feature>
<feature type="binding site" evidence="1">
    <location>
        <position position="23"/>
    </location>
    <ligand>
        <name>3-phosphoshikimate</name>
        <dbReference type="ChEBI" id="CHEBI:145989"/>
    </ligand>
</feature>
<feature type="binding site" evidence="1">
    <location>
        <position position="27"/>
    </location>
    <ligand>
        <name>3-phosphoshikimate</name>
        <dbReference type="ChEBI" id="CHEBI:145989"/>
    </ligand>
</feature>
<feature type="binding site" evidence="1">
    <location>
        <position position="93"/>
    </location>
    <ligand>
        <name>phosphoenolpyruvate</name>
        <dbReference type="ChEBI" id="CHEBI:58702"/>
    </ligand>
</feature>
<feature type="binding site" evidence="1">
    <location>
        <position position="121"/>
    </location>
    <ligand>
        <name>phosphoenolpyruvate</name>
        <dbReference type="ChEBI" id="CHEBI:58702"/>
    </ligand>
</feature>
<feature type="binding site" evidence="1">
    <location>
        <position position="168"/>
    </location>
    <ligand>
        <name>3-phosphoshikimate</name>
        <dbReference type="ChEBI" id="CHEBI:145989"/>
    </ligand>
</feature>
<feature type="binding site" evidence="1">
    <location>
        <position position="169"/>
    </location>
    <ligand>
        <name>3-phosphoshikimate</name>
        <dbReference type="ChEBI" id="CHEBI:145989"/>
    </ligand>
</feature>
<feature type="binding site" evidence="1">
    <location>
        <position position="170"/>
    </location>
    <ligand>
        <name>3-phosphoshikimate</name>
        <dbReference type="ChEBI" id="CHEBI:145989"/>
    </ligand>
</feature>
<feature type="binding site" evidence="1">
    <location>
        <position position="170"/>
    </location>
    <ligand>
        <name>phosphoenolpyruvate</name>
        <dbReference type="ChEBI" id="CHEBI:58702"/>
    </ligand>
</feature>
<feature type="binding site" evidence="1">
    <location>
        <position position="199"/>
    </location>
    <ligand>
        <name>3-phosphoshikimate</name>
        <dbReference type="ChEBI" id="CHEBI:145989"/>
    </ligand>
</feature>
<feature type="binding site" evidence="1">
    <location>
        <position position="320"/>
    </location>
    <ligand>
        <name>3-phosphoshikimate</name>
        <dbReference type="ChEBI" id="CHEBI:145989"/>
    </ligand>
</feature>
<feature type="binding site" evidence="1">
    <location>
        <position position="347"/>
    </location>
    <ligand>
        <name>3-phosphoshikimate</name>
        <dbReference type="ChEBI" id="CHEBI:145989"/>
    </ligand>
</feature>
<feature type="binding site" evidence="1">
    <location>
        <position position="351"/>
    </location>
    <ligand>
        <name>phosphoenolpyruvate</name>
        <dbReference type="ChEBI" id="CHEBI:58702"/>
    </ligand>
</feature>
<feature type="binding site" evidence="1">
    <location>
        <position position="394"/>
    </location>
    <ligand>
        <name>phosphoenolpyruvate</name>
        <dbReference type="ChEBI" id="CHEBI:58702"/>
    </ligand>
</feature>
<feature type="binding site" evidence="1">
    <location>
        <position position="419"/>
    </location>
    <ligand>
        <name>phosphoenolpyruvate</name>
        <dbReference type="ChEBI" id="CHEBI:58702"/>
    </ligand>
</feature>
<protein>
    <recommendedName>
        <fullName evidence="1">3-phosphoshikimate 1-carboxyvinyltransferase</fullName>
        <ecNumber evidence="1">2.5.1.19</ecNumber>
    </recommendedName>
    <alternativeName>
        <fullName evidence="1">5-enolpyruvylshikimate-3-phosphate synthase</fullName>
        <shortName evidence="1">EPSP synthase</shortName>
        <shortName evidence="1">EPSPS</shortName>
    </alternativeName>
</protein>
<organism>
    <name type="scientific">Burkholderia multivorans (strain ATCC 17616 / 249)</name>
    <dbReference type="NCBI Taxonomy" id="395019"/>
    <lineage>
        <taxon>Bacteria</taxon>
        <taxon>Pseudomonadati</taxon>
        <taxon>Pseudomonadota</taxon>
        <taxon>Betaproteobacteria</taxon>
        <taxon>Burkholderiales</taxon>
        <taxon>Burkholderiaceae</taxon>
        <taxon>Burkholderia</taxon>
        <taxon>Burkholderia cepacia complex</taxon>
    </lineage>
</organism>
<name>AROA_BURM1</name>
<dbReference type="EC" id="2.5.1.19" evidence="1"/>
<dbReference type="EMBL" id="CP000868">
    <property type="protein sequence ID" value="ABX15944.1"/>
    <property type="molecule type" value="Genomic_DNA"/>
</dbReference>
<dbReference type="EMBL" id="AP009385">
    <property type="protein sequence ID" value="BAG42926.1"/>
    <property type="molecule type" value="Genomic_DNA"/>
</dbReference>
<dbReference type="RefSeq" id="WP_012213841.1">
    <property type="nucleotide sequence ID" value="NC_010084.1"/>
</dbReference>
<dbReference type="SMR" id="A9ADV6"/>
<dbReference type="STRING" id="395019.BMULJ_00980"/>
<dbReference type="KEGG" id="bmj:BMULJ_00980"/>
<dbReference type="KEGG" id="bmu:Bmul_2259"/>
<dbReference type="eggNOG" id="COG0128">
    <property type="taxonomic scope" value="Bacteria"/>
</dbReference>
<dbReference type="HOGENOM" id="CLU_024321_0_0_4"/>
<dbReference type="UniPathway" id="UPA00053">
    <property type="reaction ID" value="UER00089"/>
</dbReference>
<dbReference type="Proteomes" id="UP000008815">
    <property type="component" value="Chromosome 1"/>
</dbReference>
<dbReference type="GO" id="GO:0005737">
    <property type="term" value="C:cytoplasm"/>
    <property type="evidence" value="ECO:0007669"/>
    <property type="project" value="UniProtKB-SubCell"/>
</dbReference>
<dbReference type="GO" id="GO:0003866">
    <property type="term" value="F:3-phosphoshikimate 1-carboxyvinyltransferase activity"/>
    <property type="evidence" value="ECO:0007669"/>
    <property type="project" value="UniProtKB-UniRule"/>
</dbReference>
<dbReference type="GO" id="GO:0008652">
    <property type="term" value="P:amino acid biosynthetic process"/>
    <property type="evidence" value="ECO:0007669"/>
    <property type="project" value="UniProtKB-KW"/>
</dbReference>
<dbReference type="GO" id="GO:0009073">
    <property type="term" value="P:aromatic amino acid family biosynthetic process"/>
    <property type="evidence" value="ECO:0007669"/>
    <property type="project" value="UniProtKB-KW"/>
</dbReference>
<dbReference type="GO" id="GO:0009423">
    <property type="term" value="P:chorismate biosynthetic process"/>
    <property type="evidence" value="ECO:0007669"/>
    <property type="project" value="UniProtKB-UniRule"/>
</dbReference>
<dbReference type="CDD" id="cd01556">
    <property type="entry name" value="EPSP_synthase"/>
    <property type="match status" value="1"/>
</dbReference>
<dbReference type="FunFam" id="3.65.10.10:FF:000003">
    <property type="entry name" value="3-phosphoshikimate 1-carboxyvinyltransferase"/>
    <property type="match status" value="1"/>
</dbReference>
<dbReference type="FunFam" id="3.65.10.10:FF:000004">
    <property type="entry name" value="3-phosphoshikimate 1-carboxyvinyltransferase"/>
    <property type="match status" value="1"/>
</dbReference>
<dbReference type="Gene3D" id="3.65.10.10">
    <property type="entry name" value="Enolpyruvate transferase domain"/>
    <property type="match status" value="2"/>
</dbReference>
<dbReference type="HAMAP" id="MF_00210">
    <property type="entry name" value="EPSP_synth"/>
    <property type="match status" value="1"/>
</dbReference>
<dbReference type="InterPro" id="IPR001986">
    <property type="entry name" value="Enolpyruvate_Tfrase_dom"/>
</dbReference>
<dbReference type="InterPro" id="IPR036968">
    <property type="entry name" value="Enolpyruvate_Tfrase_sf"/>
</dbReference>
<dbReference type="InterPro" id="IPR006264">
    <property type="entry name" value="EPSP_synthase"/>
</dbReference>
<dbReference type="InterPro" id="IPR023193">
    <property type="entry name" value="EPSP_synthase_CS"/>
</dbReference>
<dbReference type="InterPro" id="IPR013792">
    <property type="entry name" value="RNA3'P_cycl/enolpyr_Trfase_a/b"/>
</dbReference>
<dbReference type="NCBIfam" id="TIGR01356">
    <property type="entry name" value="aroA"/>
    <property type="match status" value="1"/>
</dbReference>
<dbReference type="PANTHER" id="PTHR21090">
    <property type="entry name" value="AROM/DEHYDROQUINATE SYNTHASE"/>
    <property type="match status" value="1"/>
</dbReference>
<dbReference type="PANTHER" id="PTHR21090:SF5">
    <property type="entry name" value="PENTAFUNCTIONAL AROM POLYPEPTIDE"/>
    <property type="match status" value="1"/>
</dbReference>
<dbReference type="Pfam" id="PF00275">
    <property type="entry name" value="EPSP_synthase"/>
    <property type="match status" value="1"/>
</dbReference>
<dbReference type="PIRSF" id="PIRSF000505">
    <property type="entry name" value="EPSPS"/>
    <property type="match status" value="1"/>
</dbReference>
<dbReference type="SUPFAM" id="SSF55205">
    <property type="entry name" value="EPT/RTPC-like"/>
    <property type="match status" value="1"/>
</dbReference>
<dbReference type="PROSITE" id="PS00104">
    <property type="entry name" value="EPSP_SYNTHASE_1"/>
    <property type="match status" value="1"/>
</dbReference>
<dbReference type="PROSITE" id="PS00885">
    <property type="entry name" value="EPSP_SYNTHASE_2"/>
    <property type="match status" value="1"/>
</dbReference>
<gene>
    <name evidence="1" type="primary">aroA</name>
    <name type="ordered locus">Bmul_2259</name>
    <name type="ordered locus">BMULJ_00980</name>
</gene>
<sequence length="434" mass="46302">MDYLDLGPYSSASGTVRLPGSKSISNRVLLLAALAEGDTTITNLLDSDDTRVMLDALGKLGVKLARDGDTCVVTGTRGAFTAKTADLFLGNAGTAVRPLTAALAINGGDYRVHGVPRMHERPIGDLVDGLRQIGAQIDYEQNEGFPPLRIRPATISVDAPIRVRGDVSSQFLTALLMTLPLVKAKDGRSIVEIDGELISKPYIDITIRLMARFGVNVEREGWQRFTVPAGVRYRSPGRIMVEGDASSASYFLAAGALGGGPLRVEGVGRASIQGDVGFAHALMQMGANVTMGDDWIEVRGIGHDHGKLEPIDMDFNLIPDAAMTIAVAALFANGTSTLRNIASWRVKETDRIAAMATELRKVGATVEEGADYLVVTPPAALTPNAAIDTYDDHRMAMCFSLVSLGGVPVRINDPKCVGKTFPDYFDRFAALAKA</sequence>
<reference key="1">
    <citation type="submission" date="2007-10" db="EMBL/GenBank/DDBJ databases">
        <title>Complete sequence of chromosome 1 of Burkholderia multivorans ATCC 17616.</title>
        <authorList>
            <person name="Copeland A."/>
            <person name="Lucas S."/>
            <person name="Lapidus A."/>
            <person name="Barry K."/>
            <person name="Glavina del Rio T."/>
            <person name="Dalin E."/>
            <person name="Tice H."/>
            <person name="Pitluck S."/>
            <person name="Chain P."/>
            <person name="Malfatti S."/>
            <person name="Shin M."/>
            <person name="Vergez L."/>
            <person name="Schmutz J."/>
            <person name="Larimer F."/>
            <person name="Land M."/>
            <person name="Hauser L."/>
            <person name="Kyrpides N."/>
            <person name="Kim E."/>
            <person name="Tiedje J."/>
            <person name="Richardson P."/>
        </authorList>
    </citation>
    <scope>NUCLEOTIDE SEQUENCE [LARGE SCALE GENOMIC DNA]</scope>
    <source>
        <strain>ATCC 17616 / 249</strain>
    </source>
</reference>
<reference key="2">
    <citation type="submission" date="2007-04" db="EMBL/GenBank/DDBJ databases">
        <title>Complete genome sequence of Burkholderia multivorans ATCC 17616.</title>
        <authorList>
            <person name="Ohtsubo Y."/>
            <person name="Yamashita A."/>
            <person name="Kurokawa K."/>
            <person name="Takami H."/>
            <person name="Yuhara S."/>
            <person name="Nishiyama E."/>
            <person name="Endo R."/>
            <person name="Miyazaki R."/>
            <person name="Ono A."/>
            <person name="Yano K."/>
            <person name="Ito M."/>
            <person name="Sota M."/>
            <person name="Yuji N."/>
            <person name="Hattori M."/>
            <person name="Tsuda M."/>
        </authorList>
    </citation>
    <scope>NUCLEOTIDE SEQUENCE [LARGE SCALE GENOMIC DNA]</scope>
    <source>
        <strain>ATCC 17616 / 249</strain>
    </source>
</reference>